<protein>
    <recommendedName>
        <fullName>UPF0481 protein At3g47200</fullName>
    </recommendedName>
</protein>
<name>Y3720_ARATH</name>
<sequence length="476" mass="54119">MADKTDIISSSSDKASPPPPSAFRNYLSSGSKEPVLLLESAGKESCCIFRVPESFVALNPKAYKPKVVSIGPYHYGEKHLQMIQQHKPRLLQLFLDEAKKKDVEENVLVKAVVDLEDKIRKSYSEELKTGHDLMFMMVLDGCFILMVFLIMSGNIELSEDPIFSIPWLLSSIQSDLLLLENQVPFFVLQTLYVGSKIGVSSDLNRIAFHFFKNPIDKEGSYWEKHRNYKAKHLLDLIRETFLPNTSESDKASSPHVQVQLHEGKSGNVPSVDSKAVPLILSAKRLRLQGIKFRLRRSKEDSILNVRLKKNKLQIPQLRFDGFISSFFLNCVAFEQFYTDSSNEITTYIVFMGCLLNNEEDVTFLRNDKLIIENHFGSNNEVSEFFKTISKDVVFEVDTSYLNNVFKGVNEYTKKWYNGLWAGFRHTHFESPWTFLSSCAVLFVILLTMLQSTVAILSYLNDKKGNGNAAPPPLGLP</sequence>
<evidence type="ECO:0000255" key="1"/>
<evidence type="ECO:0000256" key="2">
    <source>
        <dbReference type="SAM" id="MobiDB-lite"/>
    </source>
</evidence>
<evidence type="ECO:0000305" key="3"/>
<dbReference type="EMBL" id="AL133292">
    <property type="protein sequence ID" value="CAB61966.1"/>
    <property type="molecule type" value="Genomic_DNA"/>
</dbReference>
<dbReference type="EMBL" id="CP002686">
    <property type="protein sequence ID" value="AEE78254.1"/>
    <property type="molecule type" value="Genomic_DNA"/>
</dbReference>
<dbReference type="EMBL" id="CP002686">
    <property type="protein sequence ID" value="AEE78255.1"/>
    <property type="molecule type" value="Genomic_DNA"/>
</dbReference>
<dbReference type="EMBL" id="AK176252">
    <property type="protein sequence ID" value="BAD44015.1"/>
    <property type="molecule type" value="mRNA"/>
</dbReference>
<dbReference type="EMBL" id="AK221225">
    <property type="protein sequence ID" value="BAD93809.1"/>
    <property type="molecule type" value="mRNA"/>
</dbReference>
<dbReference type="PIR" id="T45656">
    <property type="entry name" value="T45656"/>
</dbReference>
<dbReference type="RefSeq" id="NP_001030825.1">
    <property type="nucleotide sequence ID" value="NM_001035748.2"/>
</dbReference>
<dbReference type="RefSeq" id="NP_190304.1">
    <property type="nucleotide sequence ID" value="NM_114587.2"/>
</dbReference>
<dbReference type="SMR" id="Q9SD53"/>
<dbReference type="BioGRID" id="9193">
    <property type="interactions" value="3"/>
</dbReference>
<dbReference type="FunCoup" id="Q9SD53">
    <property type="interactions" value="3"/>
</dbReference>
<dbReference type="STRING" id="3702.Q9SD53"/>
<dbReference type="iPTMnet" id="Q9SD53"/>
<dbReference type="SwissPalm" id="Q9SD53"/>
<dbReference type="PaxDb" id="3702-AT3G47200.2"/>
<dbReference type="ProteomicsDB" id="228610"/>
<dbReference type="EnsemblPlants" id="AT3G47200.1">
    <property type="protein sequence ID" value="AT3G47200.1"/>
    <property type="gene ID" value="AT3G47200"/>
</dbReference>
<dbReference type="EnsemblPlants" id="AT3G47200.2">
    <property type="protein sequence ID" value="AT3G47200.2"/>
    <property type="gene ID" value="AT3G47200"/>
</dbReference>
<dbReference type="GeneID" id="823873"/>
<dbReference type="Gramene" id="AT3G47200.1">
    <property type="protein sequence ID" value="AT3G47200.1"/>
    <property type="gene ID" value="AT3G47200"/>
</dbReference>
<dbReference type="Gramene" id="AT3G47200.2">
    <property type="protein sequence ID" value="AT3G47200.2"/>
    <property type="gene ID" value="AT3G47200"/>
</dbReference>
<dbReference type="KEGG" id="ath:AT3G47200"/>
<dbReference type="Araport" id="AT3G47200"/>
<dbReference type="TAIR" id="AT3G47200"/>
<dbReference type="eggNOG" id="ENOG502QQDR">
    <property type="taxonomic scope" value="Eukaryota"/>
</dbReference>
<dbReference type="HOGENOM" id="CLU_020188_0_2_1"/>
<dbReference type="InParanoid" id="Q9SD53"/>
<dbReference type="OMA" id="IHRVPDC"/>
<dbReference type="PhylomeDB" id="Q9SD53"/>
<dbReference type="PRO" id="PR:Q9SD53"/>
<dbReference type="Proteomes" id="UP000006548">
    <property type="component" value="Chromosome 3"/>
</dbReference>
<dbReference type="ExpressionAtlas" id="Q9SD53">
    <property type="expression patterns" value="baseline and differential"/>
</dbReference>
<dbReference type="GO" id="GO:0005886">
    <property type="term" value="C:plasma membrane"/>
    <property type="evidence" value="ECO:0007005"/>
    <property type="project" value="TAIR"/>
</dbReference>
<dbReference type="InterPro" id="IPR004158">
    <property type="entry name" value="DUF247_pln"/>
</dbReference>
<dbReference type="PANTHER" id="PTHR31170:SF21">
    <property type="match status" value="1"/>
</dbReference>
<dbReference type="PANTHER" id="PTHR31170">
    <property type="entry name" value="BNAC04G53230D PROTEIN"/>
    <property type="match status" value="1"/>
</dbReference>
<dbReference type="Pfam" id="PF03140">
    <property type="entry name" value="DUF247"/>
    <property type="match status" value="1"/>
</dbReference>
<organism>
    <name type="scientific">Arabidopsis thaliana</name>
    <name type="common">Mouse-ear cress</name>
    <dbReference type="NCBI Taxonomy" id="3702"/>
    <lineage>
        <taxon>Eukaryota</taxon>
        <taxon>Viridiplantae</taxon>
        <taxon>Streptophyta</taxon>
        <taxon>Embryophyta</taxon>
        <taxon>Tracheophyta</taxon>
        <taxon>Spermatophyta</taxon>
        <taxon>Magnoliopsida</taxon>
        <taxon>eudicotyledons</taxon>
        <taxon>Gunneridae</taxon>
        <taxon>Pentapetalae</taxon>
        <taxon>rosids</taxon>
        <taxon>malvids</taxon>
        <taxon>Brassicales</taxon>
        <taxon>Brassicaceae</taxon>
        <taxon>Camelineae</taxon>
        <taxon>Arabidopsis</taxon>
    </lineage>
</organism>
<comment type="subcellular location">
    <subcellularLocation>
        <location evidence="1">Membrane</location>
        <topology evidence="1">Multi-pass membrane protein</topology>
    </subcellularLocation>
</comment>
<comment type="similarity">
    <text evidence="3">Belongs to the UPF0481 family.</text>
</comment>
<gene>
    <name type="ordered locus">At3g47200</name>
    <name type="ORF">F13I12.250</name>
</gene>
<keyword id="KW-0472">Membrane</keyword>
<keyword id="KW-1185">Reference proteome</keyword>
<keyword id="KW-0812">Transmembrane</keyword>
<keyword id="KW-1133">Transmembrane helix</keyword>
<proteinExistence type="evidence at transcript level"/>
<reference key="1">
    <citation type="journal article" date="2000" name="Nature">
        <title>Sequence and analysis of chromosome 3 of the plant Arabidopsis thaliana.</title>
        <authorList>
            <person name="Salanoubat M."/>
            <person name="Lemcke K."/>
            <person name="Rieger M."/>
            <person name="Ansorge W."/>
            <person name="Unseld M."/>
            <person name="Fartmann B."/>
            <person name="Valle G."/>
            <person name="Bloecker H."/>
            <person name="Perez-Alonso M."/>
            <person name="Obermaier B."/>
            <person name="Delseny M."/>
            <person name="Boutry M."/>
            <person name="Grivell L.A."/>
            <person name="Mache R."/>
            <person name="Puigdomenech P."/>
            <person name="De Simone V."/>
            <person name="Choisne N."/>
            <person name="Artiguenave F."/>
            <person name="Robert C."/>
            <person name="Brottier P."/>
            <person name="Wincker P."/>
            <person name="Cattolico L."/>
            <person name="Weissenbach J."/>
            <person name="Saurin W."/>
            <person name="Quetier F."/>
            <person name="Schaefer M."/>
            <person name="Mueller-Auer S."/>
            <person name="Gabel C."/>
            <person name="Fuchs M."/>
            <person name="Benes V."/>
            <person name="Wurmbach E."/>
            <person name="Drzonek H."/>
            <person name="Erfle H."/>
            <person name="Jordan N."/>
            <person name="Bangert S."/>
            <person name="Wiedelmann R."/>
            <person name="Kranz H."/>
            <person name="Voss H."/>
            <person name="Holland R."/>
            <person name="Brandt P."/>
            <person name="Nyakatura G."/>
            <person name="Vezzi A."/>
            <person name="D'Angelo M."/>
            <person name="Pallavicini A."/>
            <person name="Toppo S."/>
            <person name="Simionati B."/>
            <person name="Conrad A."/>
            <person name="Hornischer K."/>
            <person name="Kauer G."/>
            <person name="Loehnert T.-H."/>
            <person name="Nordsiek G."/>
            <person name="Reichelt J."/>
            <person name="Scharfe M."/>
            <person name="Schoen O."/>
            <person name="Bargues M."/>
            <person name="Terol J."/>
            <person name="Climent J."/>
            <person name="Navarro P."/>
            <person name="Collado C."/>
            <person name="Perez-Perez A."/>
            <person name="Ottenwaelder B."/>
            <person name="Duchemin D."/>
            <person name="Cooke R."/>
            <person name="Laudie M."/>
            <person name="Berger-Llauro C."/>
            <person name="Purnelle B."/>
            <person name="Masuy D."/>
            <person name="de Haan M."/>
            <person name="Maarse A.C."/>
            <person name="Alcaraz J.-P."/>
            <person name="Cottet A."/>
            <person name="Casacuberta E."/>
            <person name="Monfort A."/>
            <person name="Argiriou A."/>
            <person name="Flores M."/>
            <person name="Liguori R."/>
            <person name="Vitale D."/>
            <person name="Mannhaupt G."/>
            <person name="Haase D."/>
            <person name="Schoof H."/>
            <person name="Rudd S."/>
            <person name="Zaccaria P."/>
            <person name="Mewes H.-W."/>
            <person name="Mayer K.F.X."/>
            <person name="Kaul S."/>
            <person name="Town C.D."/>
            <person name="Koo H.L."/>
            <person name="Tallon L.J."/>
            <person name="Jenkins J."/>
            <person name="Rooney T."/>
            <person name="Rizzo M."/>
            <person name="Walts A."/>
            <person name="Utterback T."/>
            <person name="Fujii C.Y."/>
            <person name="Shea T.P."/>
            <person name="Creasy T.H."/>
            <person name="Haas B."/>
            <person name="Maiti R."/>
            <person name="Wu D."/>
            <person name="Peterson J."/>
            <person name="Van Aken S."/>
            <person name="Pai G."/>
            <person name="Militscher J."/>
            <person name="Sellers P."/>
            <person name="Gill J.E."/>
            <person name="Feldblyum T.V."/>
            <person name="Preuss D."/>
            <person name="Lin X."/>
            <person name="Nierman W.C."/>
            <person name="Salzberg S.L."/>
            <person name="White O."/>
            <person name="Venter J.C."/>
            <person name="Fraser C.M."/>
            <person name="Kaneko T."/>
            <person name="Nakamura Y."/>
            <person name="Sato S."/>
            <person name="Kato T."/>
            <person name="Asamizu E."/>
            <person name="Sasamoto S."/>
            <person name="Kimura T."/>
            <person name="Idesawa K."/>
            <person name="Kawashima K."/>
            <person name="Kishida Y."/>
            <person name="Kiyokawa C."/>
            <person name="Kohara M."/>
            <person name="Matsumoto M."/>
            <person name="Matsuno A."/>
            <person name="Muraki A."/>
            <person name="Nakayama S."/>
            <person name="Nakazaki N."/>
            <person name="Shinpo S."/>
            <person name="Takeuchi C."/>
            <person name="Wada T."/>
            <person name="Watanabe A."/>
            <person name="Yamada M."/>
            <person name="Yasuda M."/>
            <person name="Tabata S."/>
        </authorList>
    </citation>
    <scope>NUCLEOTIDE SEQUENCE [LARGE SCALE GENOMIC DNA]</scope>
    <source>
        <strain>cv. Columbia</strain>
    </source>
</reference>
<reference key="2">
    <citation type="journal article" date="2017" name="Plant J.">
        <title>Araport11: a complete reannotation of the Arabidopsis thaliana reference genome.</title>
        <authorList>
            <person name="Cheng C.Y."/>
            <person name="Krishnakumar V."/>
            <person name="Chan A.P."/>
            <person name="Thibaud-Nissen F."/>
            <person name="Schobel S."/>
            <person name="Town C.D."/>
        </authorList>
    </citation>
    <scope>GENOME REANNOTATION</scope>
    <source>
        <strain>cv. Columbia</strain>
    </source>
</reference>
<reference key="3">
    <citation type="submission" date="2004-09" db="EMBL/GenBank/DDBJ databases">
        <title>Large-scale analysis of RIKEN Arabidopsis full-length (RAFL) cDNAs.</title>
        <authorList>
            <person name="Totoki Y."/>
            <person name="Seki M."/>
            <person name="Ishida J."/>
            <person name="Nakajima M."/>
            <person name="Enju A."/>
            <person name="Kamiya A."/>
            <person name="Narusaka M."/>
            <person name="Shin-i T."/>
            <person name="Nakagawa M."/>
            <person name="Sakamoto N."/>
            <person name="Oishi K."/>
            <person name="Kohara Y."/>
            <person name="Kobayashi M."/>
            <person name="Toyoda A."/>
            <person name="Sakaki Y."/>
            <person name="Sakurai T."/>
            <person name="Iida K."/>
            <person name="Akiyama K."/>
            <person name="Satou M."/>
            <person name="Toyoda T."/>
            <person name="Konagaya A."/>
            <person name="Carninci P."/>
            <person name="Kawai J."/>
            <person name="Hayashizaki Y."/>
            <person name="Shinozaki K."/>
        </authorList>
    </citation>
    <scope>NUCLEOTIDE SEQUENCE [LARGE SCALE MRNA]</scope>
    <source>
        <strain>cv. Columbia</strain>
    </source>
</reference>
<accession>Q9SD53</accession>
<accession>Q56YU5</accession>
<feature type="chain" id="PRO_0000300099" description="UPF0481 protein At3g47200">
    <location>
        <begin position="1"/>
        <end position="476"/>
    </location>
</feature>
<feature type="transmembrane region" description="Helical" evidence="1">
    <location>
        <begin position="133"/>
        <end position="153"/>
    </location>
</feature>
<feature type="transmembrane region" description="Helical" evidence="1">
    <location>
        <begin position="439"/>
        <end position="459"/>
    </location>
</feature>
<feature type="region of interest" description="Disordered" evidence="2">
    <location>
        <begin position="1"/>
        <end position="24"/>
    </location>
</feature>
<feature type="sequence conflict" description="In Ref. 3; BAD93809." evidence="3" ref="3">
    <original>S</original>
    <variation>G</variation>
    <location>
        <position position="220"/>
    </location>
</feature>